<name>LGT_STAAB</name>
<comment type="function">
    <text evidence="1">Catalyzes the transfer of the diacylglyceryl group from phosphatidylglycerol to the sulfhydryl group of the N-terminal cysteine of a prolipoprotein, the first step in the formation of mature lipoproteins.</text>
</comment>
<comment type="catalytic activity">
    <reaction evidence="1">
        <text>L-cysteinyl-[prolipoprotein] + a 1,2-diacyl-sn-glycero-3-phospho-(1'-sn-glycerol) = an S-1,2-diacyl-sn-glyceryl-L-cysteinyl-[prolipoprotein] + sn-glycerol 1-phosphate + H(+)</text>
        <dbReference type="Rhea" id="RHEA:56712"/>
        <dbReference type="Rhea" id="RHEA-COMP:14679"/>
        <dbReference type="Rhea" id="RHEA-COMP:14680"/>
        <dbReference type="ChEBI" id="CHEBI:15378"/>
        <dbReference type="ChEBI" id="CHEBI:29950"/>
        <dbReference type="ChEBI" id="CHEBI:57685"/>
        <dbReference type="ChEBI" id="CHEBI:64716"/>
        <dbReference type="ChEBI" id="CHEBI:140658"/>
        <dbReference type="EC" id="2.5.1.145"/>
    </reaction>
</comment>
<comment type="pathway">
    <text evidence="1">Protein modification; lipoprotein biosynthesis (diacylglyceryl transfer).</text>
</comment>
<comment type="subcellular location">
    <subcellularLocation>
        <location evidence="1">Cell membrane</location>
        <topology evidence="1">Multi-pass membrane protein</topology>
    </subcellularLocation>
</comment>
<comment type="similarity">
    <text evidence="1">Belongs to the Lgt family.</text>
</comment>
<gene>
    <name evidence="1" type="primary">lgt</name>
    <name type="ordered locus">SAB0714</name>
</gene>
<dbReference type="EC" id="2.5.1.145" evidence="1"/>
<dbReference type="EMBL" id="AJ938182">
    <property type="protein sequence ID" value="CAI80402.1"/>
    <property type="molecule type" value="Genomic_DNA"/>
</dbReference>
<dbReference type="RefSeq" id="WP_000513302.1">
    <property type="nucleotide sequence ID" value="NC_007622.1"/>
</dbReference>
<dbReference type="SMR" id="Q2YSG7"/>
<dbReference type="KEGG" id="sab:SAB0714"/>
<dbReference type="HOGENOM" id="CLU_013386_0_1_9"/>
<dbReference type="UniPathway" id="UPA00664"/>
<dbReference type="GO" id="GO:0005886">
    <property type="term" value="C:plasma membrane"/>
    <property type="evidence" value="ECO:0007669"/>
    <property type="project" value="UniProtKB-SubCell"/>
</dbReference>
<dbReference type="GO" id="GO:0008961">
    <property type="term" value="F:phosphatidylglycerol-prolipoprotein diacylglyceryl transferase activity"/>
    <property type="evidence" value="ECO:0007669"/>
    <property type="project" value="UniProtKB-UniRule"/>
</dbReference>
<dbReference type="GO" id="GO:0042158">
    <property type="term" value="P:lipoprotein biosynthetic process"/>
    <property type="evidence" value="ECO:0007669"/>
    <property type="project" value="UniProtKB-UniRule"/>
</dbReference>
<dbReference type="HAMAP" id="MF_01147">
    <property type="entry name" value="Lgt"/>
    <property type="match status" value="1"/>
</dbReference>
<dbReference type="InterPro" id="IPR001640">
    <property type="entry name" value="Lgt"/>
</dbReference>
<dbReference type="NCBIfam" id="TIGR00544">
    <property type="entry name" value="lgt"/>
    <property type="match status" value="1"/>
</dbReference>
<dbReference type="PANTHER" id="PTHR30589:SF0">
    <property type="entry name" value="PHOSPHATIDYLGLYCEROL--PROLIPOPROTEIN DIACYLGLYCERYL TRANSFERASE"/>
    <property type="match status" value="1"/>
</dbReference>
<dbReference type="PANTHER" id="PTHR30589">
    <property type="entry name" value="PROLIPOPROTEIN DIACYLGLYCERYL TRANSFERASE"/>
    <property type="match status" value="1"/>
</dbReference>
<dbReference type="Pfam" id="PF01790">
    <property type="entry name" value="LGT"/>
    <property type="match status" value="1"/>
</dbReference>
<dbReference type="PROSITE" id="PS01311">
    <property type="entry name" value="LGT"/>
    <property type="match status" value="1"/>
</dbReference>
<proteinExistence type="inferred from homology"/>
<sequence length="279" mass="31582">MGIVFNYIDPVAFNLGPLSVRWYGIIIAVGILLGYFVAQRALVKAGLHKDTLVDIIFYSALFGFIAARIYFVIFQWPYYAENPGEIIKIWHGGIAIHGGLIGGFIAGVIVCKVKNLNPFQIGDIVAPSIILAQGIGRWGNFMNHEAHGGPVSRAFLEQLHLPNFIIENMYINSQYYHPTFLYESIWDVAGFIILVNIRKHLKLGETFFLYLTWYSIGRFFIEGLRTDSLMLTSNIRVAQLVSILLILISISLIVYRRIKYNPPLYSKVGALPWPTKKVK</sequence>
<reference key="1">
    <citation type="journal article" date="2007" name="PLoS ONE">
        <title>Molecular correlates of host specialization in Staphylococcus aureus.</title>
        <authorList>
            <person name="Herron-Olson L."/>
            <person name="Fitzgerald J.R."/>
            <person name="Musser J.M."/>
            <person name="Kapur V."/>
        </authorList>
    </citation>
    <scope>NUCLEOTIDE SEQUENCE [LARGE SCALE GENOMIC DNA]</scope>
    <source>
        <strain>bovine RF122 / ET3-1</strain>
    </source>
</reference>
<organism>
    <name type="scientific">Staphylococcus aureus (strain bovine RF122 / ET3-1)</name>
    <dbReference type="NCBI Taxonomy" id="273036"/>
    <lineage>
        <taxon>Bacteria</taxon>
        <taxon>Bacillati</taxon>
        <taxon>Bacillota</taxon>
        <taxon>Bacilli</taxon>
        <taxon>Bacillales</taxon>
        <taxon>Staphylococcaceae</taxon>
        <taxon>Staphylococcus</taxon>
    </lineage>
</organism>
<protein>
    <recommendedName>
        <fullName evidence="1">Phosphatidylglycerol--prolipoprotein diacylglyceryl transferase</fullName>
        <ecNumber evidence="1">2.5.1.145</ecNumber>
    </recommendedName>
</protein>
<keyword id="KW-1003">Cell membrane</keyword>
<keyword id="KW-0472">Membrane</keyword>
<keyword id="KW-0808">Transferase</keyword>
<keyword id="KW-0812">Transmembrane</keyword>
<keyword id="KW-1133">Transmembrane helix</keyword>
<accession>Q2YSG7</accession>
<feature type="chain" id="PRO_1000053505" description="Phosphatidylglycerol--prolipoprotein diacylglyceryl transferase">
    <location>
        <begin position="1"/>
        <end position="279"/>
    </location>
</feature>
<feature type="transmembrane region" description="Helical" evidence="1">
    <location>
        <begin position="18"/>
        <end position="38"/>
    </location>
</feature>
<feature type="transmembrane region" description="Helical" evidence="1">
    <location>
        <begin position="55"/>
        <end position="75"/>
    </location>
</feature>
<feature type="transmembrane region" description="Helical" evidence="1">
    <location>
        <begin position="89"/>
        <end position="109"/>
    </location>
</feature>
<feature type="transmembrane region" description="Helical" evidence="1">
    <location>
        <begin position="203"/>
        <end position="223"/>
    </location>
</feature>
<feature type="transmembrane region" description="Helical" evidence="1">
    <location>
        <begin position="235"/>
        <end position="255"/>
    </location>
</feature>
<feature type="binding site" evidence="1">
    <location>
        <position position="137"/>
    </location>
    <ligand>
        <name>a 1,2-diacyl-sn-glycero-3-phospho-(1'-sn-glycerol)</name>
        <dbReference type="ChEBI" id="CHEBI:64716"/>
    </ligand>
</feature>
<evidence type="ECO:0000255" key="1">
    <source>
        <dbReference type="HAMAP-Rule" id="MF_01147"/>
    </source>
</evidence>